<proteinExistence type="inferred from homology"/>
<keyword id="KW-0067">ATP-binding</keyword>
<keyword id="KW-0963">Cytoplasm</keyword>
<keyword id="KW-0460">Magnesium</keyword>
<keyword id="KW-0479">Metal-binding</keyword>
<keyword id="KW-0547">Nucleotide-binding</keyword>
<keyword id="KW-0554">One-carbon metabolism</keyword>
<keyword id="KW-0630">Potassium</keyword>
<keyword id="KW-1185">Reference proteome</keyword>
<keyword id="KW-0808">Transferase</keyword>
<dbReference type="EC" id="2.5.1.6" evidence="1"/>
<dbReference type="EMBL" id="BA000028">
    <property type="protein sequence ID" value="BAC14270.1"/>
    <property type="molecule type" value="Genomic_DNA"/>
</dbReference>
<dbReference type="RefSeq" id="WP_011066707.1">
    <property type="nucleotide sequence ID" value="NC_004193.1"/>
</dbReference>
<dbReference type="SMR" id="Q8EP05"/>
<dbReference type="STRING" id="221109.gene:10734565"/>
<dbReference type="KEGG" id="oih:OB2314"/>
<dbReference type="eggNOG" id="COG0192">
    <property type="taxonomic scope" value="Bacteria"/>
</dbReference>
<dbReference type="HOGENOM" id="CLU_041802_1_1_9"/>
<dbReference type="OrthoDB" id="9801686at2"/>
<dbReference type="PhylomeDB" id="Q8EP05"/>
<dbReference type="UniPathway" id="UPA00315">
    <property type="reaction ID" value="UER00080"/>
</dbReference>
<dbReference type="Proteomes" id="UP000000822">
    <property type="component" value="Chromosome"/>
</dbReference>
<dbReference type="GO" id="GO:0005737">
    <property type="term" value="C:cytoplasm"/>
    <property type="evidence" value="ECO:0007669"/>
    <property type="project" value="UniProtKB-SubCell"/>
</dbReference>
<dbReference type="GO" id="GO:0005524">
    <property type="term" value="F:ATP binding"/>
    <property type="evidence" value="ECO:0007669"/>
    <property type="project" value="UniProtKB-UniRule"/>
</dbReference>
<dbReference type="GO" id="GO:0000287">
    <property type="term" value="F:magnesium ion binding"/>
    <property type="evidence" value="ECO:0007669"/>
    <property type="project" value="UniProtKB-UniRule"/>
</dbReference>
<dbReference type="GO" id="GO:0004478">
    <property type="term" value="F:methionine adenosyltransferase activity"/>
    <property type="evidence" value="ECO:0007669"/>
    <property type="project" value="UniProtKB-UniRule"/>
</dbReference>
<dbReference type="GO" id="GO:0006730">
    <property type="term" value="P:one-carbon metabolic process"/>
    <property type="evidence" value="ECO:0007669"/>
    <property type="project" value="UniProtKB-KW"/>
</dbReference>
<dbReference type="GO" id="GO:0006556">
    <property type="term" value="P:S-adenosylmethionine biosynthetic process"/>
    <property type="evidence" value="ECO:0007669"/>
    <property type="project" value="UniProtKB-UniRule"/>
</dbReference>
<dbReference type="CDD" id="cd18079">
    <property type="entry name" value="S-AdoMet_synt"/>
    <property type="match status" value="1"/>
</dbReference>
<dbReference type="FunFam" id="3.30.300.10:FF:000003">
    <property type="entry name" value="S-adenosylmethionine synthase"/>
    <property type="match status" value="1"/>
</dbReference>
<dbReference type="FunFam" id="3.30.300.10:FF:000004">
    <property type="entry name" value="S-adenosylmethionine synthase"/>
    <property type="match status" value="1"/>
</dbReference>
<dbReference type="Gene3D" id="3.30.300.10">
    <property type="match status" value="3"/>
</dbReference>
<dbReference type="HAMAP" id="MF_00086">
    <property type="entry name" value="S_AdoMet_synth1"/>
    <property type="match status" value="1"/>
</dbReference>
<dbReference type="InterPro" id="IPR022631">
    <property type="entry name" value="ADOMET_SYNTHASE_CS"/>
</dbReference>
<dbReference type="InterPro" id="IPR022630">
    <property type="entry name" value="S-AdoMet_synt_C"/>
</dbReference>
<dbReference type="InterPro" id="IPR022629">
    <property type="entry name" value="S-AdoMet_synt_central"/>
</dbReference>
<dbReference type="InterPro" id="IPR022628">
    <property type="entry name" value="S-AdoMet_synt_N"/>
</dbReference>
<dbReference type="InterPro" id="IPR002133">
    <property type="entry name" value="S-AdoMet_synthetase"/>
</dbReference>
<dbReference type="InterPro" id="IPR022636">
    <property type="entry name" value="S-AdoMet_synthetase_sfam"/>
</dbReference>
<dbReference type="NCBIfam" id="TIGR01034">
    <property type="entry name" value="metK"/>
    <property type="match status" value="1"/>
</dbReference>
<dbReference type="PANTHER" id="PTHR11964">
    <property type="entry name" value="S-ADENOSYLMETHIONINE SYNTHETASE"/>
    <property type="match status" value="1"/>
</dbReference>
<dbReference type="Pfam" id="PF02773">
    <property type="entry name" value="S-AdoMet_synt_C"/>
    <property type="match status" value="1"/>
</dbReference>
<dbReference type="Pfam" id="PF02772">
    <property type="entry name" value="S-AdoMet_synt_M"/>
    <property type="match status" value="1"/>
</dbReference>
<dbReference type="Pfam" id="PF00438">
    <property type="entry name" value="S-AdoMet_synt_N"/>
    <property type="match status" value="1"/>
</dbReference>
<dbReference type="PIRSF" id="PIRSF000497">
    <property type="entry name" value="MAT"/>
    <property type="match status" value="1"/>
</dbReference>
<dbReference type="SUPFAM" id="SSF55973">
    <property type="entry name" value="S-adenosylmethionine synthetase"/>
    <property type="match status" value="3"/>
</dbReference>
<dbReference type="PROSITE" id="PS00376">
    <property type="entry name" value="ADOMET_SYNTHASE_1"/>
    <property type="match status" value="1"/>
</dbReference>
<dbReference type="PROSITE" id="PS00377">
    <property type="entry name" value="ADOMET_SYNTHASE_2"/>
    <property type="match status" value="1"/>
</dbReference>
<accession>Q8EP05</accession>
<reference key="1">
    <citation type="journal article" date="2002" name="Nucleic Acids Res.">
        <title>Genome sequence of Oceanobacillus iheyensis isolated from the Iheya Ridge and its unexpected adaptive capabilities to extreme environments.</title>
        <authorList>
            <person name="Takami H."/>
            <person name="Takaki Y."/>
            <person name="Uchiyama I."/>
        </authorList>
    </citation>
    <scope>NUCLEOTIDE SEQUENCE [LARGE SCALE GENOMIC DNA]</scope>
    <source>
        <strain>DSM 14371 / CIP 107618 / JCM 11309 / KCTC 3954 / HTE831</strain>
    </source>
</reference>
<feature type="chain" id="PRO_0000174563" description="S-adenosylmethionine synthase">
    <location>
        <begin position="1"/>
        <end position="398"/>
    </location>
</feature>
<feature type="region of interest" description="Disordered" evidence="2">
    <location>
        <begin position="1"/>
        <end position="21"/>
    </location>
</feature>
<feature type="region of interest" description="Flexible loop" evidence="1">
    <location>
        <begin position="101"/>
        <end position="111"/>
    </location>
</feature>
<feature type="binding site" description="in other chain" evidence="1">
    <location>
        <position position="17"/>
    </location>
    <ligand>
        <name>ATP</name>
        <dbReference type="ChEBI" id="CHEBI:30616"/>
        <note>ligand shared between two neighboring subunits</note>
    </ligand>
</feature>
<feature type="binding site" evidence="1">
    <location>
        <position position="19"/>
    </location>
    <ligand>
        <name>Mg(2+)</name>
        <dbReference type="ChEBI" id="CHEBI:18420"/>
    </ligand>
</feature>
<feature type="binding site" evidence="1">
    <location>
        <position position="45"/>
    </location>
    <ligand>
        <name>K(+)</name>
        <dbReference type="ChEBI" id="CHEBI:29103"/>
    </ligand>
</feature>
<feature type="binding site" description="in other chain" evidence="1">
    <location>
        <position position="58"/>
    </location>
    <ligand>
        <name>L-methionine</name>
        <dbReference type="ChEBI" id="CHEBI:57844"/>
        <note>ligand shared between two neighboring subunits</note>
    </ligand>
</feature>
<feature type="binding site" description="in other chain" evidence="1">
    <location>
        <position position="101"/>
    </location>
    <ligand>
        <name>L-methionine</name>
        <dbReference type="ChEBI" id="CHEBI:57844"/>
        <note>ligand shared between two neighboring subunits</note>
    </ligand>
</feature>
<feature type="binding site" description="in other chain" evidence="1">
    <location>
        <begin position="177"/>
        <end position="179"/>
    </location>
    <ligand>
        <name>ATP</name>
        <dbReference type="ChEBI" id="CHEBI:30616"/>
        <note>ligand shared between two neighboring subunits</note>
    </ligand>
</feature>
<feature type="binding site" description="in other chain" evidence="1">
    <location>
        <begin position="244"/>
        <end position="245"/>
    </location>
    <ligand>
        <name>ATP</name>
        <dbReference type="ChEBI" id="CHEBI:30616"/>
        <note>ligand shared between two neighboring subunits</note>
    </ligand>
</feature>
<feature type="binding site" evidence="1">
    <location>
        <position position="253"/>
    </location>
    <ligand>
        <name>ATP</name>
        <dbReference type="ChEBI" id="CHEBI:30616"/>
        <note>ligand shared between two neighboring subunits</note>
    </ligand>
</feature>
<feature type="binding site" evidence="1">
    <location>
        <position position="253"/>
    </location>
    <ligand>
        <name>L-methionine</name>
        <dbReference type="ChEBI" id="CHEBI:57844"/>
        <note>ligand shared between two neighboring subunits</note>
    </ligand>
</feature>
<feature type="binding site" description="in other chain" evidence="1">
    <location>
        <begin position="259"/>
        <end position="260"/>
    </location>
    <ligand>
        <name>ATP</name>
        <dbReference type="ChEBI" id="CHEBI:30616"/>
        <note>ligand shared between two neighboring subunits</note>
    </ligand>
</feature>
<feature type="binding site" evidence="1">
    <location>
        <position position="276"/>
    </location>
    <ligand>
        <name>ATP</name>
        <dbReference type="ChEBI" id="CHEBI:30616"/>
        <note>ligand shared between two neighboring subunits</note>
    </ligand>
</feature>
<feature type="binding site" evidence="1">
    <location>
        <position position="280"/>
    </location>
    <ligand>
        <name>ATP</name>
        <dbReference type="ChEBI" id="CHEBI:30616"/>
        <note>ligand shared between two neighboring subunits</note>
    </ligand>
</feature>
<feature type="binding site" description="in other chain" evidence="1">
    <location>
        <position position="284"/>
    </location>
    <ligand>
        <name>L-methionine</name>
        <dbReference type="ChEBI" id="CHEBI:57844"/>
        <note>ligand shared between two neighboring subunits</note>
    </ligand>
</feature>
<sequence length="398" mass="43556">MAANRRLFTSESVTEGHPDKMSDQISDAILDEILKKDPNARVACETTVTTGLVLVSGEISTSTYVDIPALVRETVKEIGYTRAKYGFDFETCAVLTAIDEQSADIAGGVNQALEARQGKMSEEEIDAIGAGDQGLMFGYACDETEELMPLPISLAHQLSKRLADVRKEGIVDYLRPDGKTQVTVEYDENDKPERIDTIVISTQHHSEIQNEQIERDMIEKVIQAVVPSELLDDKTKYFINPTGRFVIGGPQGDVGLTGRKIIVDTYGGYARHGGGAFSGKDATKVDRSAAYAARYVAKNIVAAGLAKSCEVQLAYAIGVAQPVSIAVNTFGTGKVSEDRLVEAVRELFDLRPAGIIRMLDLRKPIYKNTAAYGHFGRKDILFPWEKTDKTEELIALTK</sequence>
<name>METK_OCEIH</name>
<comment type="function">
    <text evidence="1">Catalyzes the formation of S-adenosylmethionine (AdoMet) from methionine and ATP. The overall synthetic reaction is composed of two sequential steps, AdoMet formation and the subsequent tripolyphosphate hydrolysis which occurs prior to release of AdoMet from the enzyme.</text>
</comment>
<comment type="catalytic activity">
    <reaction evidence="1">
        <text>L-methionine + ATP + H2O = S-adenosyl-L-methionine + phosphate + diphosphate</text>
        <dbReference type="Rhea" id="RHEA:21080"/>
        <dbReference type="ChEBI" id="CHEBI:15377"/>
        <dbReference type="ChEBI" id="CHEBI:30616"/>
        <dbReference type="ChEBI" id="CHEBI:33019"/>
        <dbReference type="ChEBI" id="CHEBI:43474"/>
        <dbReference type="ChEBI" id="CHEBI:57844"/>
        <dbReference type="ChEBI" id="CHEBI:59789"/>
        <dbReference type="EC" id="2.5.1.6"/>
    </reaction>
</comment>
<comment type="cofactor">
    <cofactor evidence="1">
        <name>Mg(2+)</name>
        <dbReference type="ChEBI" id="CHEBI:18420"/>
    </cofactor>
    <text evidence="1">Binds 2 divalent ions per subunit.</text>
</comment>
<comment type="cofactor">
    <cofactor evidence="1">
        <name>K(+)</name>
        <dbReference type="ChEBI" id="CHEBI:29103"/>
    </cofactor>
    <text evidence="1">Binds 1 potassium ion per subunit.</text>
</comment>
<comment type="pathway">
    <text evidence="1">Amino-acid biosynthesis; S-adenosyl-L-methionine biosynthesis; S-adenosyl-L-methionine from L-methionine: step 1/1.</text>
</comment>
<comment type="subunit">
    <text evidence="1">Homotetramer; dimer of dimers.</text>
</comment>
<comment type="subcellular location">
    <subcellularLocation>
        <location evidence="1">Cytoplasm</location>
    </subcellularLocation>
</comment>
<comment type="similarity">
    <text evidence="1">Belongs to the AdoMet synthase family.</text>
</comment>
<protein>
    <recommendedName>
        <fullName evidence="1">S-adenosylmethionine synthase</fullName>
        <shortName evidence="1">AdoMet synthase</shortName>
        <ecNumber evidence="1">2.5.1.6</ecNumber>
    </recommendedName>
    <alternativeName>
        <fullName evidence="1">MAT</fullName>
    </alternativeName>
    <alternativeName>
        <fullName evidence="1">Methionine adenosyltransferase</fullName>
    </alternativeName>
</protein>
<gene>
    <name evidence="1" type="primary">metK</name>
    <name type="ordered locus">OB2314</name>
</gene>
<organism>
    <name type="scientific">Oceanobacillus iheyensis (strain DSM 14371 / CIP 107618 / JCM 11309 / KCTC 3954 / HTE831)</name>
    <dbReference type="NCBI Taxonomy" id="221109"/>
    <lineage>
        <taxon>Bacteria</taxon>
        <taxon>Bacillati</taxon>
        <taxon>Bacillota</taxon>
        <taxon>Bacilli</taxon>
        <taxon>Bacillales</taxon>
        <taxon>Bacillaceae</taxon>
        <taxon>Oceanobacillus</taxon>
    </lineage>
</organism>
<evidence type="ECO:0000255" key="1">
    <source>
        <dbReference type="HAMAP-Rule" id="MF_00086"/>
    </source>
</evidence>
<evidence type="ECO:0000256" key="2">
    <source>
        <dbReference type="SAM" id="MobiDB-lite"/>
    </source>
</evidence>